<sequence length="142" mass="16630">MTRTINLQLPKRTSTYSSNFLKPAGCPKYEFVEGSKKPSRPRNKFIIMRTIFHNSSSKIVSAIWKHSPDQFQKYFQLLAEFEQNWHKHNHSPAAALTDAEAFRVIARSLHPQPRVIKRRQQKKKVKMLCGRFSRIEDVFSSL</sequence>
<organism>
    <name type="scientific">Eremothecium gossypii (strain ATCC 10895 / CBS 109.51 / FGSC 9923 / NRRL Y-1056)</name>
    <name type="common">Yeast</name>
    <name type="synonym">Ashbya gossypii</name>
    <dbReference type="NCBI Taxonomy" id="284811"/>
    <lineage>
        <taxon>Eukaryota</taxon>
        <taxon>Fungi</taxon>
        <taxon>Dikarya</taxon>
        <taxon>Ascomycota</taxon>
        <taxon>Saccharomycotina</taxon>
        <taxon>Saccharomycetes</taxon>
        <taxon>Saccharomycetales</taxon>
        <taxon>Saccharomycetaceae</taxon>
        <taxon>Eremothecium</taxon>
    </lineage>
</organism>
<accession>Q755R3</accession>
<reference key="1">
    <citation type="journal article" date="2004" name="Science">
        <title>The Ashbya gossypii genome as a tool for mapping the ancient Saccharomyces cerevisiae genome.</title>
        <authorList>
            <person name="Dietrich F.S."/>
            <person name="Voegeli S."/>
            <person name="Brachat S."/>
            <person name="Lerch A."/>
            <person name="Gates K."/>
            <person name="Steiner S."/>
            <person name="Mohr C."/>
            <person name="Poehlmann R."/>
            <person name="Luedi P."/>
            <person name="Choi S."/>
            <person name="Wing R.A."/>
            <person name="Flavier A."/>
            <person name="Gaffney T.D."/>
            <person name="Philippsen P."/>
        </authorList>
    </citation>
    <scope>NUCLEOTIDE SEQUENCE [LARGE SCALE GENOMIC DNA]</scope>
    <source>
        <strain>ATCC 10895 / CBS 109.51 / FGSC 9923 / NRRL Y-1056</strain>
    </source>
</reference>
<reference key="2">
    <citation type="journal article" date="2013" name="G3 (Bethesda)">
        <title>Genomes of Ashbya fungi isolated from insects reveal four mating-type loci, numerous translocations, lack of transposons, and distinct gene duplications.</title>
        <authorList>
            <person name="Dietrich F.S."/>
            <person name="Voegeli S."/>
            <person name="Kuo S."/>
            <person name="Philippsen P."/>
        </authorList>
    </citation>
    <scope>GENOME REANNOTATION</scope>
    <source>
        <strain>ATCC 10895 / CBS 109.51 / FGSC 9923 / NRRL Y-1056</strain>
    </source>
</reference>
<name>MATT_EREGS</name>
<feature type="chain" id="PRO_0000048580" description="Putative mating-type transcription factor">
    <location>
        <begin position="1"/>
        <end position="142"/>
    </location>
</feature>
<protein>
    <recommendedName>
        <fullName>Putative mating-type transcription factor</fullName>
    </recommendedName>
</protein>
<proteinExistence type="predicted"/>
<comment type="subcellular location">
    <subcellularLocation>
        <location evidence="1">Nucleus</location>
    </subcellularLocation>
</comment>
<keyword id="KW-0539">Nucleus</keyword>
<keyword id="KW-1185">Reference proteome</keyword>
<keyword id="KW-0804">Transcription</keyword>
<keyword id="KW-0805">Transcription regulation</keyword>
<gene>
    <name type="ordered locus">ADL393W</name>
</gene>
<gene>
    <name type="ordered locus">AER455C</name>
</gene>
<gene>
    <name type="ordered locus">AFR643W-A</name>
</gene>
<evidence type="ECO:0000305" key="1"/>
<dbReference type="EMBL" id="AE016817">
    <property type="protein sequence ID" value="AAS51527.1"/>
    <property type="molecule type" value="Genomic_DNA"/>
</dbReference>
<dbReference type="EMBL" id="AE016818">
    <property type="protein sequence ID" value="AAS53134.1"/>
    <property type="molecule type" value="Genomic_DNA"/>
</dbReference>
<dbReference type="EMBL" id="AE016819">
    <property type="protein sequence ID" value="AAS54015.3"/>
    <property type="molecule type" value="Genomic_DNA"/>
</dbReference>
<dbReference type="RefSeq" id="NP_983703.1">
    <property type="nucleotide sequence ID" value="NM_209056.1"/>
</dbReference>
<dbReference type="RefSeq" id="NP_985310.1">
    <property type="nucleotide sequence ID" value="NM_210664.1"/>
</dbReference>
<dbReference type="RefSeq" id="NP_986191.3">
    <property type="nucleotide sequence ID" value="NM_212327.3"/>
</dbReference>
<dbReference type="RefSeq" id="XP_002999501.1">
    <property type="nucleotide sequence ID" value="XM_002999455.1"/>
</dbReference>
<dbReference type="STRING" id="284811.Q755R3"/>
<dbReference type="EnsemblFungi" id="AAS51527">
    <property type="protein sequence ID" value="AAS51527"/>
    <property type="gene ID" value="AGOS_ADL393W"/>
</dbReference>
<dbReference type="EnsemblFungi" id="AAS53134">
    <property type="protein sequence ID" value="AAS53134"/>
    <property type="gene ID" value="AGOS_AER455C"/>
</dbReference>
<dbReference type="EnsemblFungi" id="AAS54015">
    <property type="protein sequence ID" value="AAS54015"/>
    <property type="gene ID" value="AGOS_AFR643WA"/>
</dbReference>
<dbReference type="EnsemblFungi" id="ADJ41797">
    <property type="protein sequence ID" value="ADJ41797"/>
    <property type="gene ID" value="AGOS_AFR750C"/>
</dbReference>
<dbReference type="GeneID" id="4619836"/>
<dbReference type="GeneID" id="4621531"/>
<dbReference type="GeneID" id="4622479"/>
<dbReference type="KEGG" id="ago:AGOS_ADL393W"/>
<dbReference type="KEGG" id="ago:AGOS_AER455C"/>
<dbReference type="KEGG" id="ago:AGOS_AFR643WA"/>
<dbReference type="KEGG" id="ago:AGOS_AFR750C"/>
<dbReference type="eggNOG" id="ENOG502SG0V">
    <property type="taxonomic scope" value="Eukaryota"/>
</dbReference>
<dbReference type="HOGENOM" id="CLU_1815356_0_0_1"/>
<dbReference type="InParanoid" id="Q755R3"/>
<dbReference type="OrthoDB" id="4067974at2759"/>
<dbReference type="Proteomes" id="UP000000591">
    <property type="component" value="Chromosome IV"/>
</dbReference>
<dbReference type="Proteomes" id="UP000000591">
    <property type="component" value="Chromosome V"/>
</dbReference>
<dbReference type="Proteomes" id="UP000000591">
    <property type="component" value="Chromosome VI"/>
</dbReference>
<dbReference type="GO" id="GO:0005634">
    <property type="term" value="C:nucleus"/>
    <property type="evidence" value="ECO:0007669"/>
    <property type="project" value="UniProtKB-SubCell"/>
</dbReference>